<reference key="1">
    <citation type="journal article" date="2008" name="Genome Res.">
        <title>Comparative genome analysis of Salmonella enteritidis PT4 and Salmonella gallinarum 287/91 provides insights into evolutionary and host adaptation pathways.</title>
        <authorList>
            <person name="Thomson N.R."/>
            <person name="Clayton D.J."/>
            <person name="Windhorst D."/>
            <person name="Vernikos G."/>
            <person name="Davidson S."/>
            <person name="Churcher C."/>
            <person name="Quail M.A."/>
            <person name="Stevens M."/>
            <person name="Jones M.A."/>
            <person name="Watson M."/>
            <person name="Barron A."/>
            <person name="Layton A."/>
            <person name="Pickard D."/>
            <person name="Kingsley R.A."/>
            <person name="Bignell A."/>
            <person name="Clark L."/>
            <person name="Harris B."/>
            <person name="Ormond D."/>
            <person name="Abdellah Z."/>
            <person name="Brooks K."/>
            <person name="Cherevach I."/>
            <person name="Chillingworth T."/>
            <person name="Woodward J."/>
            <person name="Norberczak H."/>
            <person name="Lord A."/>
            <person name="Arrowsmith C."/>
            <person name="Jagels K."/>
            <person name="Moule S."/>
            <person name="Mungall K."/>
            <person name="Saunders M."/>
            <person name="Whitehead S."/>
            <person name="Chabalgoity J.A."/>
            <person name="Maskell D."/>
            <person name="Humphreys T."/>
            <person name="Roberts M."/>
            <person name="Barrow P.A."/>
            <person name="Dougan G."/>
            <person name="Parkhill J."/>
        </authorList>
    </citation>
    <scope>NUCLEOTIDE SEQUENCE [LARGE SCALE GENOMIC DNA]</scope>
    <source>
        <strain>287/91 / NCTC 13346</strain>
    </source>
</reference>
<comment type="function">
    <text evidence="1">Catalyzes the condensation of pantoate with beta-alanine in an ATP-dependent reaction via a pantoyl-adenylate intermediate.</text>
</comment>
<comment type="catalytic activity">
    <reaction evidence="1">
        <text>(R)-pantoate + beta-alanine + ATP = (R)-pantothenate + AMP + diphosphate + H(+)</text>
        <dbReference type="Rhea" id="RHEA:10912"/>
        <dbReference type="ChEBI" id="CHEBI:15378"/>
        <dbReference type="ChEBI" id="CHEBI:15980"/>
        <dbReference type="ChEBI" id="CHEBI:29032"/>
        <dbReference type="ChEBI" id="CHEBI:30616"/>
        <dbReference type="ChEBI" id="CHEBI:33019"/>
        <dbReference type="ChEBI" id="CHEBI:57966"/>
        <dbReference type="ChEBI" id="CHEBI:456215"/>
        <dbReference type="EC" id="6.3.2.1"/>
    </reaction>
</comment>
<comment type="pathway">
    <text evidence="1">Cofactor biosynthesis; (R)-pantothenate biosynthesis; (R)-pantothenate from (R)-pantoate and beta-alanine: step 1/1.</text>
</comment>
<comment type="subunit">
    <text evidence="1">Homodimer.</text>
</comment>
<comment type="subcellular location">
    <subcellularLocation>
        <location evidence="1">Cytoplasm</location>
    </subcellularLocation>
</comment>
<comment type="miscellaneous">
    <text evidence="1">The reaction proceeds by a bi uni uni bi ping pong mechanism.</text>
</comment>
<comment type="similarity">
    <text evidence="1">Belongs to the pantothenate synthetase family.</text>
</comment>
<gene>
    <name evidence="1" type="primary">panC</name>
    <name type="ordered locus">SG0185</name>
</gene>
<proteinExistence type="inferred from homology"/>
<name>PANC_SALG2</name>
<organism>
    <name type="scientific">Salmonella gallinarum (strain 287/91 / NCTC 13346)</name>
    <dbReference type="NCBI Taxonomy" id="550538"/>
    <lineage>
        <taxon>Bacteria</taxon>
        <taxon>Pseudomonadati</taxon>
        <taxon>Pseudomonadota</taxon>
        <taxon>Gammaproteobacteria</taxon>
        <taxon>Enterobacterales</taxon>
        <taxon>Enterobacteriaceae</taxon>
        <taxon>Salmonella</taxon>
    </lineage>
</organism>
<keyword id="KW-0067">ATP-binding</keyword>
<keyword id="KW-0963">Cytoplasm</keyword>
<keyword id="KW-0436">Ligase</keyword>
<keyword id="KW-0547">Nucleotide-binding</keyword>
<keyword id="KW-0566">Pantothenate biosynthesis</keyword>
<accession>B5RHC0</accession>
<evidence type="ECO:0000255" key="1">
    <source>
        <dbReference type="HAMAP-Rule" id="MF_00158"/>
    </source>
</evidence>
<sequence>MLIIETLPLLRQHIRRLRQEGKRVALVPTMGNLHDGHMKLVDEAKARADVVIVSIFVNPMQFDRPDDLVRYPRTLQEDCEKLNKRKVDYVFAPAVEEIYPQGLEGQTYVDVPGLSTMLEGASRPGHFRGVSTIVSKLFNLIQPDIACFGEKDFQQLALIRKMVADMSYDIEIVGVPIIRAKDGLALSSRNAYLTAEQRKIAPGLYNVMNSIAEKLIAGNRELQEIIAIAEQELNEKGFRADDIQIRDADTLQELTETSKRAVILAAAWLGQARLIDNQSVTLAQ</sequence>
<protein>
    <recommendedName>
        <fullName evidence="1">Pantothenate synthetase</fullName>
        <shortName evidence="1">PS</shortName>
        <ecNumber evidence="1">6.3.2.1</ecNumber>
    </recommendedName>
    <alternativeName>
        <fullName evidence="1">Pantoate--beta-alanine ligase</fullName>
    </alternativeName>
    <alternativeName>
        <fullName evidence="1">Pantoate-activating enzyme</fullName>
    </alternativeName>
</protein>
<feature type="chain" id="PRO_1000097101" description="Pantothenate synthetase">
    <location>
        <begin position="1"/>
        <end position="284"/>
    </location>
</feature>
<feature type="active site" description="Proton donor" evidence="1">
    <location>
        <position position="37"/>
    </location>
</feature>
<feature type="binding site" evidence="1">
    <location>
        <begin position="30"/>
        <end position="37"/>
    </location>
    <ligand>
        <name>ATP</name>
        <dbReference type="ChEBI" id="CHEBI:30616"/>
    </ligand>
</feature>
<feature type="binding site" evidence="1">
    <location>
        <position position="61"/>
    </location>
    <ligand>
        <name>(R)-pantoate</name>
        <dbReference type="ChEBI" id="CHEBI:15980"/>
    </ligand>
</feature>
<feature type="binding site" evidence="1">
    <location>
        <position position="61"/>
    </location>
    <ligand>
        <name>beta-alanine</name>
        <dbReference type="ChEBI" id="CHEBI:57966"/>
    </ligand>
</feature>
<feature type="binding site" evidence="1">
    <location>
        <begin position="149"/>
        <end position="152"/>
    </location>
    <ligand>
        <name>ATP</name>
        <dbReference type="ChEBI" id="CHEBI:30616"/>
    </ligand>
</feature>
<feature type="binding site" evidence="1">
    <location>
        <position position="155"/>
    </location>
    <ligand>
        <name>(R)-pantoate</name>
        <dbReference type="ChEBI" id="CHEBI:15980"/>
    </ligand>
</feature>
<feature type="binding site" evidence="1">
    <location>
        <position position="178"/>
    </location>
    <ligand>
        <name>ATP</name>
        <dbReference type="ChEBI" id="CHEBI:30616"/>
    </ligand>
</feature>
<feature type="binding site" evidence="1">
    <location>
        <begin position="186"/>
        <end position="189"/>
    </location>
    <ligand>
        <name>ATP</name>
        <dbReference type="ChEBI" id="CHEBI:30616"/>
    </ligand>
</feature>
<dbReference type="EC" id="6.3.2.1" evidence="1"/>
<dbReference type="EMBL" id="AM933173">
    <property type="protein sequence ID" value="CAR36092.1"/>
    <property type="molecule type" value="Genomic_DNA"/>
</dbReference>
<dbReference type="RefSeq" id="WP_000905348.1">
    <property type="nucleotide sequence ID" value="NC_011274.1"/>
</dbReference>
<dbReference type="SMR" id="B5RHC0"/>
<dbReference type="KEGG" id="seg:SG0185"/>
<dbReference type="HOGENOM" id="CLU_047148_0_0_6"/>
<dbReference type="UniPathway" id="UPA00028">
    <property type="reaction ID" value="UER00005"/>
</dbReference>
<dbReference type="Proteomes" id="UP000008321">
    <property type="component" value="Chromosome"/>
</dbReference>
<dbReference type="GO" id="GO:0005829">
    <property type="term" value="C:cytosol"/>
    <property type="evidence" value="ECO:0007669"/>
    <property type="project" value="TreeGrafter"/>
</dbReference>
<dbReference type="GO" id="GO:0005524">
    <property type="term" value="F:ATP binding"/>
    <property type="evidence" value="ECO:0007669"/>
    <property type="project" value="UniProtKB-KW"/>
</dbReference>
<dbReference type="GO" id="GO:0004592">
    <property type="term" value="F:pantoate-beta-alanine ligase activity"/>
    <property type="evidence" value="ECO:0007669"/>
    <property type="project" value="UniProtKB-UniRule"/>
</dbReference>
<dbReference type="GO" id="GO:0015940">
    <property type="term" value="P:pantothenate biosynthetic process"/>
    <property type="evidence" value="ECO:0007669"/>
    <property type="project" value="UniProtKB-UniRule"/>
</dbReference>
<dbReference type="CDD" id="cd00560">
    <property type="entry name" value="PanC"/>
    <property type="match status" value="1"/>
</dbReference>
<dbReference type="FunFam" id="3.30.1300.10:FF:000001">
    <property type="entry name" value="Pantothenate synthetase"/>
    <property type="match status" value="1"/>
</dbReference>
<dbReference type="FunFam" id="3.40.50.620:FF:000013">
    <property type="entry name" value="Pantothenate synthetase"/>
    <property type="match status" value="1"/>
</dbReference>
<dbReference type="Gene3D" id="3.40.50.620">
    <property type="entry name" value="HUPs"/>
    <property type="match status" value="1"/>
</dbReference>
<dbReference type="Gene3D" id="3.30.1300.10">
    <property type="entry name" value="Pantoate-beta-alanine ligase, C-terminal domain"/>
    <property type="match status" value="1"/>
</dbReference>
<dbReference type="HAMAP" id="MF_00158">
    <property type="entry name" value="PanC"/>
    <property type="match status" value="1"/>
</dbReference>
<dbReference type="InterPro" id="IPR004821">
    <property type="entry name" value="Cyt_trans-like"/>
</dbReference>
<dbReference type="InterPro" id="IPR003721">
    <property type="entry name" value="Pantoate_ligase"/>
</dbReference>
<dbReference type="InterPro" id="IPR042176">
    <property type="entry name" value="Pantoate_ligase_C"/>
</dbReference>
<dbReference type="InterPro" id="IPR014729">
    <property type="entry name" value="Rossmann-like_a/b/a_fold"/>
</dbReference>
<dbReference type="NCBIfam" id="TIGR00125">
    <property type="entry name" value="cyt_tran_rel"/>
    <property type="match status" value="1"/>
</dbReference>
<dbReference type="NCBIfam" id="TIGR00018">
    <property type="entry name" value="panC"/>
    <property type="match status" value="1"/>
</dbReference>
<dbReference type="PANTHER" id="PTHR21299">
    <property type="entry name" value="CYTIDYLATE KINASE/PANTOATE-BETA-ALANINE LIGASE"/>
    <property type="match status" value="1"/>
</dbReference>
<dbReference type="PANTHER" id="PTHR21299:SF1">
    <property type="entry name" value="PANTOATE--BETA-ALANINE LIGASE"/>
    <property type="match status" value="1"/>
</dbReference>
<dbReference type="Pfam" id="PF02569">
    <property type="entry name" value="Pantoate_ligase"/>
    <property type="match status" value="1"/>
</dbReference>
<dbReference type="SUPFAM" id="SSF52374">
    <property type="entry name" value="Nucleotidylyl transferase"/>
    <property type="match status" value="1"/>
</dbReference>